<proteinExistence type="inferred from homology"/>
<feature type="chain" id="PRO_0000375710" description="Succinyl-diaminopimelate desuccinylase">
    <location>
        <begin position="1"/>
        <end position="382"/>
    </location>
</feature>
<feature type="active site" evidence="1">
    <location>
        <position position="75"/>
    </location>
</feature>
<feature type="active site" description="Proton acceptor" evidence="1">
    <location>
        <position position="140"/>
    </location>
</feature>
<feature type="binding site" evidence="1">
    <location>
        <position position="73"/>
    </location>
    <ligand>
        <name>Zn(2+)</name>
        <dbReference type="ChEBI" id="CHEBI:29105"/>
        <label>1</label>
    </ligand>
</feature>
<feature type="binding site" evidence="1">
    <location>
        <position position="106"/>
    </location>
    <ligand>
        <name>Zn(2+)</name>
        <dbReference type="ChEBI" id="CHEBI:29105"/>
        <label>1</label>
    </ligand>
</feature>
<feature type="binding site" evidence="1">
    <location>
        <position position="106"/>
    </location>
    <ligand>
        <name>Zn(2+)</name>
        <dbReference type="ChEBI" id="CHEBI:29105"/>
        <label>2</label>
    </ligand>
</feature>
<feature type="binding site" evidence="1">
    <location>
        <position position="141"/>
    </location>
    <ligand>
        <name>Zn(2+)</name>
        <dbReference type="ChEBI" id="CHEBI:29105"/>
        <label>2</label>
    </ligand>
</feature>
<feature type="binding site" evidence="1">
    <location>
        <position position="169"/>
    </location>
    <ligand>
        <name>Zn(2+)</name>
        <dbReference type="ChEBI" id="CHEBI:29105"/>
        <label>1</label>
    </ligand>
</feature>
<feature type="binding site" evidence="1">
    <location>
        <position position="355"/>
    </location>
    <ligand>
        <name>Zn(2+)</name>
        <dbReference type="ChEBI" id="CHEBI:29105"/>
        <label>2</label>
    </ligand>
</feature>
<keyword id="KW-0028">Amino-acid biosynthesis</keyword>
<keyword id="KW-0170">Cobalt</keyword>
<keyword id="KW-0220">Diaminopimelate biosynthesis</keyword>
<keyword id="KW-0378">Hydrolase</keyword>
<keyword id="KW-0457">Lysine biosynthesis</keyword>
<keyword id="KW-0479">Metal-binding</keyword>
<keyword id="KW-1185">Reference proteome</keyword>
<keyword id="KW-0862">Zinc</keyword>
<accession>Q21HG2</accession>
<organism>
    <name type="scientific">Saccharophagus degradans (strain 2-40 / ATCC 43961 / DSM 17024)</name>
    <dbReference type="NCBI Taxonomy" id="203122"/>
    <lineage>
        <taxon>Bacteria</taxon>
        <taxon>Pseudomonadati</taxon>
        <taxon>Pseudomonadota</taxon>
        <taxon>Gammaproteobacteria</taxon>
        <taxon>Cellvibrionales</taxon>
        <taxon>Cellvibrionaceae</taxon>
        <taxon>Saccharophagus</taxon>
    </lineage>
</organism>
<sequence length="382" mass="41017">MTNESAHNTPTVKLACDLIAQPSVTPEDAHCQRMMIERLEAIGFKVENLRFGDVDNFWAIRGESGPILAFAGHTDVVPTGDLGKWATDPFTPTIKDGMLYGRGAADMKGSLAAMITACESFIAAHPNHTGRIAFLITSDEEGPAINGTVKVVEWLEARNEKIKWCLVGEPSSTTLVGDVIKNGRRGSLGAELIVKGVQGHVAYPHLAVNPIHMIAPALAEMASETWDNGNEFFPPTSFQVSNFNSGTGATNVVPGEANVVFNFRFSTELTADILKQRTHAILDKHNVNYDLKWNLSGEPFLTAEGELVAASVAAIKKITGRDTELSTAGGTSDGRFIAPTGAQVLELGPVNATIHQINECVSVDDLNTLSDIYCTMLTELLA</sequence>
<protein>
    <recommendedName>
        <fullName evidence="1">Succinyl-diaminopimelate desuccinylase</fullName>
        <shortName evidence="1">SDAP desuccinylase</shortName>
        <ecNumber evidence="1">3.5.1.18</ecNumber>
    </recommendedName>
    <alternativeName>
        <fullName evidence="1">N-succinyl-LL-2,6-diaminoheptanedioate amidohydrolase</fullName>
    </alternativeName>
</protein>
<name>DAPE_SACD2</name>
<comment type="function">
    <text evidence="1">Catalyzes the hydrolysis of N-succinyl-L,L-diaminopimelic acid (SDAP), forming succinate and LL-2,6-diaminopimelate (DAP), an intermediate involved in the bacterial biosynthesis of lysine and meso-diaminopimelic acid, an essential component of bacterial cell walls.</text>
</comment>
<comment type="catalytic activity">
    <reaction evidence="1">
        <text>N-succinyl-(2S,6S)-2,6-diaminopimelate + H2O = (2S,6S)-2,6-diaminopimelate + succinate</text>
        <dbReference type="Rhea" id="RHEA:22608"/>
        <dbReference type="ChEBI" id="CHEBI:15377"/>
        <dbReference type="ChEBI" id="CHEBI:30031"/>
        <dbReference type="ChEBI" id="CHEBI:57609"/>
        <dbReference type="ChEBI" id="CHEBI:58087"/>
        <dbReference type="EC" id="3.5.1.18"/>
    </reaction>
</comment>
<comment type="cofactor">
    <cofactor evidence="1">
        <name>Zn(2+)</name>
        <dbReference type="ChEBI" id="CHEBI:29105"/>
    </cofactor>
    <cofactor evidence="1">
        <name>Co(2+)</name>
        <dbReference type="ChEBI" id="CHEBI:48828"/>
    </cofactor>
    <text evidence="1">Binds 2 Zn(2+) or Co(2+) ions per subunit.</text>
</comment>
<comment type="pathway">
    <text evidence="1">Amino-acid biosynthesis; L-lysine biosynthesis via DAP pathway; LL-2,6-diaminopimelate from (S)-tetrahydrodipicolinate (succinylase route): step 3/3.</text>
</comment>
<comment type="subunit">
    <text evidence="1">Homodimer.</text>
</comment>
<comment type="similarity">
    <text evidence="1">Belongs to the peptidase M20A family. DapE subfamily.</text>
</comment>
<evidence type="ECO:0000255" key="1">
    <source>
        <dbReference type="HAMAP-Rule" id="MF_01690"/>
    </source>
</evidence>
<gene>
    <name evidence="1" type="primary">dapE</name>
    <name type="ordered locus">Sde_2607</name>
</gene>
<dbReference type="EC" id="3.5.1.18" evidence="1"/>
<dbReference type="EMBL" id="CP000282">
    <property type="protein sequence ID" value="ABD81867.1"/>
    <property type="molecule type" value="Genomic_DNA"/>
</dbReference>
<dbReference type="RefSeq" id="WP_011469084.1">
    <property type="nucleotide sequence ID" value="NC_007912.1"/>
</dbReference>
<dbReference type="SMR" id="Q21HG2"/>
<dbReference type="STRING" id="203122.Sde_2607"/>
<dbReference type="GeneID" id="98614269"/>
<dbReference type="KEGG" id="sde:Sde_2607"/>
<dbReference type="eggNOG" id="COG0624">
    <property type="taxonomic scope" value="Bacteria"/>
</dbReference>
<dbReference type="HOGENOM" id="CLU_021802_4_0_6"/>
<dbReference type="OrthoDB" id="9809784at2"/>
<dbReference type="UniPathway" id="UPA00034">
    <property type="reaction ID" value="UER00021"/>
</dbReference>
<dbReference type="Proteomes" id="UP000001947">
    <property type="component" value="Chromosome"/>
</dbReference>
<dbReference type="GO" id="GO:0008777">
    <property type="term" value="F:acetylornithine deacetylase activity"/>
    <property type="evidence" value="ECO:0007669"/>
    <property type="project" value="TreeGrafter"/>
</dbReference>
<dbReference type="GO" id="GO:0050897">
    <property type="term" value="F:cobalt ion binding"/>
    <property type="evidence" value="ECO:0007669"/>
    <property type="project" value="UniProtKB-UniRule"/>
</dbReference>
<dbReference type="GO" id="GO:0009014">
    <property type="term" value="F:succinyl-diaminopimelate desuccinylase activity"/>
    <property type="evidence" value="ECO:0007669"/>
    <property type="project" value="UniProtKB-UniRule"/>
</dbReference>
<dbReference type="GO" id="GO:0008270">
    <property type="term" value="F:zinc ion binding"/>
    <property type="evidence" value="ECO:0007669"/>
    <property type="project" value="UniProtKB-UniRule"/>
</dbReference>
<dbReference type="GO" id="GO:0019877">
    <property type="term" value="P:diaminopimelate biosynthetic process"/>
    <property type="evidence" value="ECO:0007669"/>
    <property type="project" value="UniProtKB-UniRule"/>
</dbReference>
<dbReference type="GO" id="GO:0006526">
    <property type="term" value="P:L-arginine biosynthetic process"/>
    <property type="evidence" value="ECO:0007669"/>
    <property type="project" value="TreeGrafter"/>
</dbReference>
<dbReference type="GO" id="GO:0009089">
    <property type="term" value="P:lysine biosynthetic process via diaminopimelate"/>
    <property type="evidence" value="ECO:0007669"/>
    <property type="project" value="UniProtKB-UniRule"/>
</dbReference>
<dbReference type="CDD" id="cd03891">
    <property type="entry name" value="M20_DapE_proteobac"/>
    <property type="match status" value="1"/>
</dbReference>
<dbReference type="FunFam" id="3.30.70.360:FF:000011">
    <property type="entry name" value="Succinyl-diaminopimelate desuccinylase"/>
    <property type="match status" value="1"/>
</dbReference>
<dbReference type="FunFam" id="3.40.630.10:FF:000005">
    <property type="entry name" value="Succinyl-diaminopimelate desuccinylase"/>
    <property type="match status" value="1"/>
</dbReference>
<dbReference type="Gene3D" id="3.40.630.10">
    <property type="entry name" value="Zn peptidases"/>
    <property type="match status" value="2"/>
</dbReference>
<dbReference type="HAMAP" id="MF_01690">
    <property type="entry name" value="DapE"/>
    <property type="match status" value="1"/>
</dbReference>
<dbReference type="InterPro" id="IPR001261">
    <property type="entry name" value="ArgE/DapE_CS"/>
</dbReference>
<dbReference type="InterPro" id="IPR036264">
    <property type="entry name" value="Bact_exopeptidase_dim_dom"/>
</dbReference>
<dbReference type="InterPro" id="IPR005941">
    <property type="entry name" value="DapE_proteobac"/>
</dbReference>
<dbReference type="InterPro" id="IPR002933">
    <property type="entry name" value="Peptidase_M20"/>
</dbReference>
<dbReference type="InterPro" id="IPR011650">
    <property type="entry name" value="Peptidase_M20_dimer"/>
</dbReference>
<dbReference type="InterPro" id="IPR050072">
    <property type="entry name" value="Peptidase_M20A"/>
</dbReference>
<dbReference type="NCBIfam" id="TIGR01246">
    <property type="entry name" value="dapE_proteo"/>
    <property type="match status" value="1"/>
</dbReference>
<dbReference type="NCBIfam" id="NF009557">
    <property type="entry name" value="PRK13009.1"/>
    <property type="match status" value="1"/>
</dbReference>
<dbReference type="PANTHER" id="PTHR43808">
    <property type="entry name" value="ACETYLORNITHINE DEACETYLASE"/>
    <property type="match status" value="1"/>
</dbReference>
<dbReference type="PANTHER" id="PTHR43808:SF31">
    <property type="entry name" value="N-ACETYL-L-CITRULLINE DEACETYLASE"/>
    <property type="match status" value="1"/>
</dbReference>
<dbReference type="Pfam" id="PF07687">
    <property type="entry name" value="M20_dimer"/>
    <property type="match status" value="1"/>
</dbReference>
<dbReference type="Pfam" id="PF01546">
    <property type="entry name" value="Peptidase_M20"/>
    <property type="match status" value="1"/>
</dbReference>
<dbReference type="SUPFAM" id="SSF55031">
    <property type="entry name" value="Bacterial exopeptidase dimerisation domain"/>
    <property type="match status" value="1"/>
</dbReference>
<dbReference type="SUPFAM" id="SSF53187">
    <property type="entry name" value="Zn-dependent exopeptidases"/>
    <property type="match status" value="1"/>
</dbReference>
<dbReference type="PROSITE" id="PS00758">
    <property type="entry name" value="ARGE_DAPE_CPG2_1"/>
    <property type="match status" value="1"/>
</dbReference>
<dbReference type="PROSITE" id="PS00759">
    <property type="entry name" value="ARGE_DAPE_CPG2_2"/>
    <property type="match status" value="1"/>
</dbReference>
<reference key="1">
    <citation type="journal article" date="2008" name="PLoS Genet.">
        <title>Complete genome sequence of the complex carbohydrate-degrading marine bacterium, Saccharophagus degradans strain 2-40 T.</title>
        <authorList>
            <person name="Weiner R.M."/>
            <person name="Taylor L.E. II"/>
            <person name="Henrissat B."/>
            <person name="Hauser L."/>
            <person name="Land M."/>
            <person name="Coutinho P.M."/>
            <person name="Rancurel C."/>
            <person name="Saunders E.H."/>
            <person name="Longmire A.G."/>
            <person name="Zhang H."/>
            <person name="Bayer E.A."/>
            <person name="Gilbert H.J."/>
            <person name="Larimer F."/>
            <person name="Zhulin I.B."/>
            <person name="Ekborg N.A."/>
            <person name="Lamed R."/>
            <person name="Richardson P.M."/>
            <person name="Borovok I."/>
            <person name="Hutcheson S."/>
        </authorList>
    </citation>
    <scope>NUCLEOTIDE SEQUENCE [LARGE SCALE GENOMIC DNA]</scope>
    <source>
        <strain>2-40 / ATCC 43961 / DSM 17024</strain>
    </source>
</reference>